<comment type="function">
    <text evidence="1">Associates with the EF-Tu.GDP complex and induces the exchange of GDP to GTP. It remains bound to the aminoacyl-tRNA.EF-Tu.GTP complex up to the GTP hydrolysis stage on the ribosome.</text>
</comment>
<comment type="subcellular location">
    <subcellularLocation>
        <location evidence="1">Cytoplasm</location>
    </subcellularLocation>
</comment>
<comment type="similarity">
    <text evidence="1">Belongs to the EF-Ts family.</text>
</comment>
<comment type="sequence caution" evidence="2">
    <conflict type="erroneous initiation">
        <sequence resource="EMBL-CDS" id="ABV14283"/>
    </conflict>
</comment>
<dbReference type="EMBL" id="CP000822">
    <property type="protein sequence ID" value="ABV14283.1"/>
    <property type="status" value="ALT_INIT"/>
    <property type="molecule type" value="Genomic_DNA"/>
</dbReference>
<dbReference type="RefSeq" id="WP_024130688.1">
    <property type="nucleotide sequence ID" value="NC_009792.1"/>
</dbReference>
<dbReference type="SMR" id="A8ALC0"/>
<dbReference type="STRING" id="290338.CKO_03198"/>
<dbReference type="GeneID" id="45136981"/>
<dbReference type="KEGG" id="cko:CKO_03198"/>
<dbReference type="HOGENOM" id="CLU_047155_0_2_6"/>
<dbReference type="OrthoDB" id="9808348at2"/>
<dbReference type="Proteomes" id="UP000008148">
    <property type="component" value="Chromosome"/>
</dbReference>
<dbReference type="GO" id="GO:0005737">
    <property type="term" value="C:cytoplasm"/>
    <property type="evidence" value="ECO:0007669"/>
    <property type="project" value="UniProtKB-SubCell"/>
</dbReference>
<dbReference type="GO" id="GO:0003746">
    <property type="term" value="F:translation elongation factor activity"/>
    <property type="evidence" value="ECO:0007669"/>
    <property type="project" value="UniProtKB-UniRule"/>
</dbReference>
<dbReference type="CDD" id="cd14275">
    <property type="entry name" value="UBA_EF-Ts"/>
    <property type="match status" value="1"/>
</dbReference>
<dbReference type="FunFam" id="1.10.286.20:FF:000001">
    <property type="entry name" value="Elongation factor Ts"/>
    <property type="match status" value="1"/>
</dbReference>
<dbReference type="FunFam" id="1.10.8.10:FF:000001">
    <property type="entry name" value="Elongation factor Ts"/>
    <property type="match status" value="1"/>
</dbReference>
<dbReference type="FunFam" id="3.30.479.20:FF:000001">
    <property type="entry name" value="Elongation factor Ts"/>
    <property type="match status" value="1"/>
</dbReference>
<dbReference type="Gene3D" id="1.10.286.20">
    <property type="match status" value="1"/>
</dbReference>
<dbReference type="Gene3D" id="1.10.8.10">
    <property type="entry name" value="DNA helicase RuvA subunit, C-terminal domain"/>
    <property type="match status" value="1"/>
</dbReference>
<dbReference type="Gene3D" id="3.30.479.20">
    <property type="entry name" value="Elongation factor Ts, dimerisation domain"/>
    <property type="match status" value="2"/>
</dbReference>
<dbReference type="HAMAP" id="MF_00050">
    <property type="entry name" value="EF_Ts"/>
    <property type="match status" value="1"/>
</dbReference>
<dbReference type="InterPro" id="IPR036402">
    <property type="entry name" value="EF-Ts_dimer_sf"/>
</dbReference>
<dbReference type="InterPro" id="IPR001816">
    <property type="entry name" value="Transl_elong_EFTs/EF1B"/>
</dbReference>
<dbReference type="InterPro" id="IPR014039">
    <property type="entry name" value="Transl_elong_EFTs/EF1B_dimer"/>
</dbReference>
<dbReference type="InterPro" id="IPR018101">
    <property type="entry name" value="Transl_elong_Ts_CS"/>
</dbReference>
<dbReference type="InterPro" id="IPR009060">
    <property type="entry name" value="UBA-like_sf"/>
</dbReference>
<dbReference type="NCBIfam" id="TIGR00116">
    <property type="entry name" value="tsf"/>
    <property type="match status" value="1"/>
</dbReference>
<dbReference type="PANTHER" id="PTHR11741">
    <property type="entry name" value="ELONGATION FACTOR TS"/>
    <property type="match status" value="1"/>
</dbReference>
<dbReference type="PANTHER" id="PTHR11741:SF0">
    <property type="entry name" value="ELONGATION FACTOR TS, MITOCHONDRIAL"/>
    <property type="match status" value="1"/>
</dbReference>
<dbReference type="Pfam" id="PF00889">
    <property type="entry name" value="EF_TS"/>
    <property type="match status" value="1"/>
</dbReference>
<dbReference type="SUPFAM" id="SSF54713">
    <property type="entry name" value="Elongation factor Ts (EF-Ts), dimerisation domain"/>
    <property type="match status" value="2"/>
</dbReference>
<dbReference type="SUPFAM" id="SSF46934">
    <property type="entry name" value="UBA-like"/>
    <property type="match status" value="1"/>
</dbReference>
<dbReference type="PROSITE" id="PS01126">
    <property type="entry name" value="EF_TS_1"/>
    <property type="match status" value="1"/>
</dbReference>
<dbReference type="PROSITE" id="PS01127">
    <property type="entry name" value="EF_TS_2"/>
    <property type="match status" value="1"/>
</dbReference>
<protein>
    <recommendedName>
        <fullName evidence="1">Elongation factor Ts</fullName>
        <shortName evidence="1">EF-Ts</shortName>
    </recommendedName>
</protein>
<organism>
    <name type="scientific">Citrobacter koseri (strain ATCC BAA-895 / CDC 4225-83 / SGSC4696)</name>
    <dbReference type="NCBI Taxonomy" id="290338"/>
    <lineage>
        <taxon>Bacteria</taxon>
        <taxon>Pseudomonadati</taxon>
        <taxon>Pseudomonadota</taxon>
        <taxon>Gammaproteobacteria</taxon>
        <taxon>Enterobacterales</taxon>
        <taxon>Enterobacteriaceae</taxon>
        <taxon>Citrobacter</taxon>
    </lineage>
</organism>
<accession>A8ALC0</accession>
<proteinExistence type="inferred from homology"/>
<evidence type="ECO:0000255" key="1">
    <source>
        <dbReference type="HAMAP-Rule" id="MF_00050"/>
    </source>
</evidence>
<evidence type="ECO:0000305" key="2"/>
<reference key="1">
    <citation type="submission" date="2007-08" db="EMBL/GenBank/DDBJ databases">
        <authorList>
            <consortium name="The Citrobacter koseri Genome Sequencing Project"/>
            <person name="McClelland M."/>
            <person name="Sanderson E.K."/>
            <person name="Porwollik S."/>
            <person name="Spieth J."/>
            <person name="Clifton W.S."/>
            <person name="Latreille P."/>
            <person name="Courtney L."/>
            <person name="Wang C."/>
            <person name="Pepin K."/>
            <person name="Bhonagiri V."/>
            <person name="Nash W."/>
            <person name="Johnson M."/>
            <person name="Thiruvilangam P."/>
            <person name="Wilson R."/>
        </authorList>
    </citation>
    <scope>NUCLEOTIDE SEQUENCE [LARGE SCALE GENOMIC DNA]</scope>
    <source>
        <strain>ATCC BAA-895 / CDC 4225-83 / SGSC4696</strain>
    </source>
</reference>
<sequence length="283" mass="30374">MAEITASLVKELRERTGAGMMDCKKALTEANGDIELAIENMRKSGAIKAAKKAGNVAADGVIKTKIDGNYGIILEVNCQTDFVAKDAGFQAFADKVLDAAVAGKITDVDVLKAQFEEERVALVAKIGENINIRRVASLEGDVLGSYQHGARIGVLVAAKGADEELVKQLAMHVAASKPEFVKPEDVSAEVVEKEYQVQLDIAMQSGKPKEIAEKMVEGRMKKFTGEVSLTGQPFVMEPSKSVGQLLKEHNADVTGFIRFEVGEGIEKVETDFAAEVAAMSKQS</sequence>
<keyword id="KW-0963">Cytoplasm</keyword>
<keyword id="KW-0251">Elongation factor</keyword>
<keyword id="KW-0648">Protein biosynthesis</keyword>
<keyword id="KW-1185">Reference proteome</keyword>
<name>EFTS_CITK8</name>
<feature type="chain" id="PRO_0000323449" description="Elongation factor Ts">
    <location>
        <begin position="1"/>
        <end position="283"/>
    </location>
</feature>
<feature type="region of interest" description="Involved in Mg(2+) ion dislocation from EF-Tu" evidence="1">
    <location>
        <begin position="80"/>
        <end position="83"/>
    </location>
</feature>
<gene>
    <name evidence="1" type="primary">tsf</name>
    <name type="ordered locus">CKO_03198</name>
</gene>